<feature type="signal peptide" evidence="1">
    <location>
        <begin position="1"/>
        <end position="37"/>
    </location>
</feature>
<feature type="chain" id="PRO_0000008981" description="Fibroblast growth factor 10">
    <location>
        <begin position="38"/>
        <end position="208"/>
    </location>
</feature>
<feature type="glycosylation site" description="N-linked (GlcNAc...) asparagine" evidence="1">
    <location>
        <position position="51"/>
    </location>
</feature>
<feature type="glycosylation site" description="N-linked (GlcNAc...) asparagine" evidence="1">
    <location>
        <position position="196"/>
    </location>
</feature>
<feature type="sequence variant" id="VAR_029888" description="In LADD3; dbSNP:rs104893885." evidence="5">
    <original>C</original>
    <variation>F</variation>
    <location>
        <position position="106"/>
    </location>
</feature>
<feature type="sequence variant" id="VAR_029889" description="In LADD3; dbSNP:rs104893886." evidence="7">
    <original>I</original>
    <variation>R</variation>
    <location>
        <position position="156"/>
    </location>
</feature>
<feature type="sequence conflict" description="In Ref. 5; CAG46489." evidence="8" ref="5">
    <original>D</original>
    <variation>V</variation>
    <location>
        <position position="43"/>
    </location>
</feature>
<feature type="sequence conflict" description="In Ref. 3; AAL05875." evidence="8" ref="3">
    <original>V</original>
    <variation>A</variation>
    <location>
        <position position="120"/>
    </location>
</feature>
<feature type="sequence conflict" description="In Ref. 3; AAL05875." evidence="8" ref="3">
    <original>M</original>
    <variation>R</variation>
    <location>
        <position position="134"/>
    </location>
</feature>
<feature type="helix" evidence="9">
    <location>
        <begin position="70"/>
        <end position="73"/>
    </location>
</feature>
<feature type="strand" evidence="9">
    <location>
        <begin position="76"/>
        <end position="84"/>
    </location>
</feature>
<feature type="strand" evidence="9">
    <location>
        <begin position="89"/>
        <end position="92"/>
    </location>
</feature>
<feature type="strand" evidence="9">
    <location>
        <begin position="98"/>
        <end position="101"/>
    </location>
</feature>
<feature type="strand" evidence="9">
    <location>
        <begin position="111"/>
        <end position="117"/>
    </location>
</feature>
<feature type="strand" evidence="9">
    <location>
        <begin position="120"/>
        <end position="125"/>
    </location>
</feature>
<feature type="turn" evidence="9">
    <location>
        <begin position="126"/>
        <end position="129"/>
    </location>
</feature>
<feature type="strand" evidence="9">
    <location>
        <begin position="130"/>
        <end position="134"/>
    </location>
</feature>
<feature type="strand" evidence="9">
    <location>
        <begin position="138"/>
        <end position="145"/>
    </location>
</feature>
<feature type="strand" evidence="9">
    <location>
        <begin position="150"/>
        <end position="156"/>
    </location>
</feature>
<feature type="strand" evidence="9">
    <location>
        <begin position="162"/>
        <end position="171"/>
    </location>
</feature>
<feature type="strand" evidence="9">
    <location>
        <begin position="174"/>
        <end position="177"/>
    </location>
</feature>
<feature type="helix" evidence="9">
    <location>
        <begin position="189"/>
        <end position="191"/>
    </location>
</feature>
<feature type="helix" evidence="9">
    <location>
        <begin position="197"/>
        <end position="199"/>
    </location>
</feature>
<feature type="strand" evidence="9">
    <location>
        <begin position="201"/>
        <end position="205"/>
    </location>
</feature>
<gene>
    <name type="primary">FGF10</name>
</gene>
<organism>
    <name type="scientific">Homo sapiens</name>
    <name type="common">Human</name>
    <dbReference type="NCBI Taxonomy" id="9606"/>
    <lineage>
        <taxon>Eukaryota</taxon>
        <taxon>Metazoa</taxon>
        <taxon>Chordata</taxon>
        <taxon>Craniata</taxon>
        <taxon>Vertebrata</taxon>
        <taxon>Euteleostomi</taxon>
        <taxon>Mammalia</taxon>
        <taxon>Eutheria</taxon>
        <taxon>Euarchontoglires</taxon>
        <taxon>Primates</taxon>
        <taxon>Haplorrhini</taxon>
        <taxon>Catarrhini</taxon>
        <taxon>Hominidae</taxon>
        <taxon>Homo</taxon>
    </lineage>
</organism>
<comment type="function">
    <text evidence="6">Plays an important role in the regulation of embryonic development, cell proliferation and cell differentiation. Required for normal branching morphogenesis. May play a role in wound healing.</text>
</comment>
<comment type="subunit">
    <text evidence="2 4 6">Interacts with FGFR1 and FGFR2. Interacts with FGFBP1.</text>
</comment>
<comment type="interaction">
    <interactant intactId="EBI-1035684">
        <id>O15520</id>
    </interactant>
    <interactant intactId="EBI-1028658">
        <id>P21802</id>
        <label>FGFR2</label>
    </interactant>
    <organismsDiffer>false</organismsDiffer>
    <experiments>2</experiments>
</comment>
<comment type="interaction">
    <interactant intactId="EBI-1035684">
        <id>O15520</id>
    </interactant>
    <interactant intactId="EBI-10268630">
        <id>Q8N9Q2</id>
        <label>SREK1IP1</label>
    </interactant>
    <organismsDiffer>false</organismsDiffer>
    <experiments>3</experiments>
</comment>
<comment type="interaction">
    <interactant intactId="EBI-1035684">
        <id>O15520</id>
    </interactant>
    <interactant intactId="EBI-741515">
        <id>Q9NVV9</id>
        <label>THAP1</label>
    </interactant>
    <organismsDiffer>false</organismsDiffer>
    <experiments>3</experiments>
</comment>
<comment type="subcellular location">
    <subcellularLocation>
        <location evidence="8">Secreted</location>
    </subcellularLocation>
</comment>
<comment type="disease" evidence="3">
    <disease id="DI-01199">
        <name>Aplasia of lacrimal and salivary glands</name>
        <acronym>ALSG</acronym>
        <description>A rare condition characterized by dry conjunctival mucosae, irritable eyes, epiphora (constant tearing), and xerostomia (dryness of the mouth), which increases risk of dental erosion, dental caries, periodontal disease, and oral infections. ALSG has variable expressivity, and affected individuals may have aplasia or hypoplasia of the lacrimal, parotid, submandibular, and sublingual glands and absence of the lacrimal puncta.</description>
        <dbReference type="MIM" id="180920"/>
    </disease>
    <text>The disease is caused by variants affecting the gene represented in this entry.</text>
</comment>
<comment type="disease" evidence="5 7">
    <disease id="DI-06573">
        <name>Lacrimo-auriculo-dento-digital syndrome 3</name>
        <acronym>LADD3</acronym>
        <description>A form of lacrimo-auriculo-dento-digital syndrome, an autosomal dominant disease characterized by aplastic/hypoplastic lacrimal and salivary glands and ducts, cup-shaped ears, hearing loss, hypodontia and enamel hypoplasia, and distal limb segments anomalies. In addition to these cardinal features, facial dysmorphism, malformations of the kidney and respiratory system and abnormal genitalia have been reported. Craniosynostosis and severe syndactyly are not observed.</description>
        <dbReference type="MIM" id="620193"/>
    </disease>
    <text>The disease is caused by variants affecting the gene represented in this entry.</text>
</comment>
<comment type="similarity">
    <text evidence="8">Belongs to the heparin-binding growth factors family.</text>
</comment>
<name>FGF10_HUMAN</name>
<sequence length="208" mass="23436">MWKWILTHCASAFPHLPGCCCCCFLLLFLVSSVPVTCQALGQDMVSPEATNSSSSSFSSPSSAGRHVRSYNHLQGDVRWRKLFSFTKYFLKIEKNGKVSGTKKENCPYSILEITSVEIGVVAVKAINSNYYLAMNKKGKLYGSKEFNNDCKLKERIEENGYNTYASFNWQHNGRQMYVALNGKGAPRRGQKTRRKNTSAHFLPMVVHS</sequence>
<keyword id="KW-0002">3D-structure</keyword>
<keyword id="KW-0225">Disease variant</keyword>
<keyword id="KW-0038">Ectodermal dysplasia</keyword>
<keyword id="KW-0325">Glycoprotein</keyword>
<keyword id="KW-0339">Growth factor</keyword>
<keyword id="KW-0953">Lacrimo-auriculo-dento-digital syndrome</keyword>
<keyword id="KW-1267">Proteomics identification</keyword>
<keyword id="KW-1185">Reference proteome</keyword>
<keyword id="KW-0964">Secreted</keyword>
<keyword id="KW-0732">Signal</keyword>
<protein>
    <recommendedName>
        <fullName>Fibroblast growth factor 10</fullName>
        <shortName>FGF-10</shortName>
    </recommendedName>
    <alternativeName>
        <fullName>Keratinocyte growth factor 2</fullName>
    </alternativeName>
</protein>
<dbReference type="EMBL" id="AB002097">
    <property type="protein sequence ID" value="BAA22331.1"/>
    <property type="molecule type" value="mRNA"/>
</dbReference>
<dbReference type="EMBL" id="U67918">
    <property type="protein sequence ID" value="AAB61991.1"/>
    <property type="molecule type" value="mRNA"/>
</dbReference>
<dbReference type="EMBL" id="AF411527">
    <property type="protein sequence ID" value="AAL05875.1"/>
    <property type="molecule type" value="mRNA"/>
</dbReference>
<dbReference type="EMBL" id="GQ351295">
    <property type="protein sequence ID" value="ACU00617.1"/>
    <property type="molecule type" value="mRNA"/>
</dbReference>
<dbReference type="EMBL" id="CR541665">
    <property type="protein sequence ID" value="CAG46466.1"/>
    <property type="molecule type" value="mRNA"/>
</dbReference>
<dbReference type="EMBL" id="CR541688">
    <property type="protein sequence ID" value="CAG46489.1"/>
    <property type="molecule type" value="mRNA"/>
</dbReference>
<dbReference type="EMBL" id="AY604046">
    <property type="protein sequence ID" value="AAS99733.1"/>
    <property type="molecule type" value="Genomic_DNA"/>
</dbReference>
<dbReference type="EMBL" id="CH471119">
    <property type="protein sequence ID" value="EAW56075.1"/>
    <property type="molecule type" value="Genomic_DNA"/>
</dbReference>
<dbReference type="EMBL" id="BC069561">
    <property type="protein sequence ID" value="AAH69561.1"/>
    <property type="molecule type" value="mRNA"/>
</dbReference>
<dbReference type="EMBL" id="BC105021">
    <property type="protein sequence ID" value="AAI05022.1"/>
    <property type="molecule type" value="mRNA"/>
</dbReference>
<dbReference type="EMBL" id="BC105023">
    <property type="protein sequence ID" value="AAI05024.1"/>
    <property type="molecule type" value="mRNA"/>
</dbReference>
<dbReference type="CCDS" id="CCDS3950.1"/>
<dbReference type="RefSeq" id="NP_004456.1">
    <property type="nucleotide sequence ID" value="NM_004465.2"/>
</dbReference>
<dbReference type="RefSeq" id="XP_005248321.1">
    <property type="nucleotide sequence ID" value="XM_005248264.5"/>
</dbReference>
<dbReference type="PDB" id="1NUN">
    <property type="method" value="X-ray"/>
    <property type="resolution" value="2.90 A"/>
    <property type="chains" value="A=64-208"/>
</dbReference>
<dbReference type="PDBsum" id="1NUN"/>
<dbReference type="SMR" id="O15520"/>
<dbReference type="BioGRID" id="108546">
    <property type="interactions" value="12"/>
</dbReference>
<dbReference type="DIP" id="DIP-6037N"/>
<dbReference type="FunCoup" id="O15520">
    <property type="interactions" value="886"/>
</dbReference>
<dbReference type="IntAct" id="O15520">
    <property type="interactions" value="9"/>
</dbReference>
<dbReference type="STRING" id="9606.ENSP00000264664"/>
<dbReference type="GlyCosmos" id="O15520">
    <property type="glycosylation" value="2 sites, No reported glycans"/>
</dbReference>
<dbReference type="GlyGen" id="O15520">
    <property type="glycosylation" value="2 sites"/>
</dbReference>
<dbReference type="iPTMnet" id="O15520"/>
<dbReference type="PhosphoSitePlus" id="O15520"/>
<dbReference type="BioMuta" id="FGF10"/>
<dbReference type="jPOST" id="O15520"/>
<dbReference type="MassIVE" id="O15520"/>
<dbReference type="PaxDb" id="9606-ENSP00000264664"/>
<dbReference type="PeptideAtlas" id="O15520"/>
<dbReference type="ProteomicsDB" id="48721"/>
<dbReference type="Antibodypedia" id="4149">
    <property type="antibodies" value="431 antibodies from 37 providers"/>
</dbReference>
<dbReference type="DNASU" id="2255"/>
<dbReference type="Ensembl" id="ENST00000264664.5">
    <property type="protein sequence ID" value="ENSP00000264664.4"/>
    <property type="gene ID" value="ENSG00000070193.5"/>
</dbReference>
<dbReference type="GeneID" id="2255"/>
<dbReference type="KEGG" id="hsa:2255"/>
<dbReference type="MANE-Select" id="ENST00000264664.5">
    <property type="protein sequence ID" value="ENSP00000264664.4"/>
    <property type="RefSeq nucleotide sequence ID" value="NM_004465.2"/>
    <property type="RefSeq protein sequence ID" value="NP_004456.1"/>
</dbReference>
<dbReference type="UCSC" id="uc003jog.2">
    <property type="organism name" value="human"/>
</dbReference>
<dbReference type="AGR" id="HGNC:3666"/>
<dbReference type="CTD" id="2255"/>
<dbReference type="DisGeNET" id="2255"/>
<dbReference type="GeneCards" id="FGF10"/>
<dbReference type="HGNC" id="HGNC:3666">
    <property type="gene designation" value="FGF10"/>
</dbReference>
<dbReference type="HPA" id="ENSG00000070193">
    <property type="expression patterns" value="Low tissue specificity"/>
</dbReference>
<dbReference type="MalaCards" id="FGF10"/>
<dbReference type="MIM" id="180920">
    <property type="type" value="phenotype"/>
</dbReference>
<dbReference type="MIM" id="602115">
    <property type="type" value="gene"/>
</dbReference>
<dbReference type="MIM" id="620193">
    <property type="type" value="phenotype"/>
</dbReference>
<dbReference type="neXtProt" id="NX_O15520"/>
<dbReference type="OpenTargets" id="ENSG00000070193"/>
<dbReference type="Orphanet" id="86815">
    <property type="disease" value="Aplasia of lacrimal and salivary glands"/>
</dbReference>
<dbReference type="Orphanet" id="2363">
    <property type="disease" value="Lacrimoauriculodentodigital syndrome"/>
</dbReference>
<dbReference type="PharmGKB" id="PA28106"/>
<dbReference type="VEuPathDB" id="HostDB:ENSG00000070193"/>
<dbReference type="eggNOG" id="KOG3885">
    <property type="taxonomic scope" value="Eukaryota"/>
</dbReference>
<dbReference type="GeneTree" id="ENSGT00940000158907"/>
<dbReference type="HOGENOM" id="CLU_081609_3_1_1"/>
<dbReference type="InParanoid" id="O15520"/>
<dbReference type="OMA" id="EFNTDCK"/>
<dbReference type="OrthoDB" id="5987799at2759"/>
<dbReference type="PAN-GO" id="O15520">
    <property type="GO annotations" value="18 GO annotations based on evolutionary models"/>
</dbReference>
<dbReference type="PhylomeDB" id="O15520"/>
<dbReference type="TreeFam" id="TF317805"/>
<dbReference type="PathwayCommons" id="O15520"/>
<dbReference type="Reactome" id="R-HSA-109704">
    <property type="pathway name" value="PI3K Cascade"/>
</dbReference>
<dbReference type="Reactome" id="R-HSA-1257604">
    <property type="pathway name" value="PIP3 activates AKT signaling"/>
</dbReference>
<dbReference type="Reactome" id="R-HSA-190370">
    <property type="pathway name" value="FGFR1b ligand binding and activation"/>
</dbReference>
<dbReference type="Reactome" id="R-HSA-190377">
    <property type="pathway name" value="FGFR2b ligand binding and activation"/>
</dbReference>
<dbReference type="Reactome" id="R-HSA-2033519">
    <property type="pathway name" value="Activated point mutants of FGFR2"/>
</dbReference>
<dbReference type="Reactome" id="R-HSA-210747">
    <property type="pathway name" value="Regulation of gene expression in early pancreatic precursor cells"/>
</dbReference>
<dbReference type="Reactome" id="R-HSA-2219530">
    <property type="pathway name" value="Constitutive Signaling by Aberrant PI3K in Cancer"/>
</dbReference>
<dbReference type="Reactome" id="R-HSA-5654219">
    <property type="pathway name" value="Phospholipase C-mediated cascade: FGFR1"/>
</dbReference>
<dbReference type="Reactome" id="R-HSA-5654221">
    <property type="pathway name" value="Phospholipase C-mediated cascade, FGFR2"/>
</dbReference>
<dbReference type="Reactome" id="R-HSA-5654687">
    <property type="pathway name" value="Downstream signaling of activated FGFR1"/>
</dbReference>
<dbReference type="Reactome" id="R-HSA-5654688">
    <property type="pathway name" value="SHC-mediated cascade:FGFR1"/>
</dbReference>
<dbReference type="Reactome" id="R-HSA-5654689">
    <property type="pathway name" value="PI-3K cascade:FGFR1"/>
</dbReference>
<dbReference type="Reactome" id="R-HSA-5654693">
    <property type="pathway name" value="FRS-mediated FGFR1 signaling"/>
</dbReference>
<dbReference type="Reactome" id="R-HSA-5654695">
    <property type="pathway name" value="PI-3K cascade:FGFR2"/>
</dbReference>
<dbReference type="Reactome" id="R-HSA-5654699">
    <property type="pathway name" value="SHC-mediated cascade:FGFR2"/>
</dbReference>
<dbReference type="Reactome" id="R-HSA-5654700">
    <property type="pathway name" value="FRS-mediated FGFR2 signaling"/>
</dbReference>
<dbReference type="Reactome" id="R-HSA-5654726">
    <property type="pathway name" value="Negative regulation of FGFR1 signaling"/>
</dbReference>
<dbReference type="Reactome" id="R-HSA-5654727">
    <property type="pathway name" value="Negative regulation of FGFR2 signaling"/>
</dbReference>
<dbReference type="Reactome" id="R-HSA-5655253">
    <property type="pathway name" value="Signaling by FGFR2 in disease"/>
</dbReference>
<dbReference type="Reactome" id="R-HSA-5658623">
    <property type="pathway name" value="FGFRL1 modulation of FGFR1 signaling"/>
</dbReference>
<dbReference type="Reactome" id="R-HSA-5673001">
    <property type="pathway name" value="RAF/MAP kinase cascade"/>
</dbReference>
<dbReference type="Reactome" id="R-HSA-6811558">
    <property type="pathway name" value="PI5P, PP2A and IER3 Regulate PI3K/AKT Signaling"/>
</dbReference>
<dbReference type="Reactome" id="R-HSA-9925561">
    <property type="pathway name" value="Developmental Lineage of Pancreatic Acinar Cells"/>
</dbReference>
<dbReference type="SignaLink" id="O15520"/>
<dbReference type="SIGNOR" id="O15520"/>
<dbReference type="BioGRID-ORCS" id="2255">
    <property type="hits" value="241 hits in 1154 CRISPR screens"/>
</dbReference>
<dbReference type="ChiTaRS" id="FGF10">
    <property type="organism name" value="human"/>
</dbReference>
<dbReference type="EvolutionaryTrace" id="O15520"/>
<dbReference type="GeneWiki" id="FGF10"/>
<dbReference type="GenomeRNAi" id="2255"/>
<dbReference type="Pharos" id="O15520">
    <property type="development level" value="Tbio"/>
</dbReference>
<dbReference type="PRO" id="PR:O15520"/>
<dbReference type="Proteomes" id="UP000005640">
    <property type="component" value="Chromosome 5"/>
</dbReference>
<dbReference type="RNAct" id="O15520">
    <property type="molecule type" value="protein"/>
</dbReference>
<dbReference type="Bgee" id="ENSG00000070193">
    <property type="expression patterns" value="Expressed in buccal mucosa cell and 117 other cell types or tissues"/>
</dbReference>
<dbReference type="ExpressionAtlas" id="O15520">
    <property type="expression patterns" value="baseline and differential"/>
</dbReference>
<dbReference type="GO" id="GO:0009986">
    <property type="term" value="C:cell surface"/>
    <property type="evidence" value="ECO:0000314"/>
    <property type="project" value="UniProtKB"/>
</dbReference>
<dbReference type="GO" id="GO:0005737">
    <property type="term" value="C:cytoplasm"/>
    <property type="evidence" value="ECO:0000318"/>
    <property type="project" value="GO_Central"/>
</dbReference>
<dbReference type="GO" id="GO:0005576">
    <property type="term" value="C:extracellular region"/>
    <property type="evidence" value="ECO:0000304"/>
    <property type="project" value="Reactome"/>
</dbReference>
<dbReference type="GO" id="GO:0005615">
    <property type="term" value="C:extracellular space"/>
    <property type="evidence" value="ECO:0000314"/>
    <property type="project" value="UniProtKB"/>
</dbReference>
<dbReference type="GO" id="GO:0005634">
    <property type="term" value="C:nucleus"/>
    <property type="evidence" value="ECO:0000314"/>
    <property type="project" value="UniProtKB"/>
</dbReference>
<dbReference type="GO" id="GO:0005886">
    <property type="term" value="C:plasma membrane"/>
    <property type="evidence" value="ECO:0000314"/>
    <property type="project" value="UniProtKB"/>
</dbReference>
<dbReference type="GO" id="GO:0042056">
    <property type="term" value="F:chemoattractant activity"/>
    <property type="evidence" value="ECO:0000314"/>
    <property type="project" value="UniProtKB"/>
</dbReference>
<dbReference type="GO" id="GO:0005104">
    <property type="term" value="F:fibroblast growth factor receptor binding"/>
    <property type="evidence" value="ECO:0000314"/>
    <property type="project" value="UniProtKB"/>
</dbReference>
<dbReference type="GO" id="GO:0008083">
    <property type="term" value="F:growth factor activity"/>
    <property type="evidence" value="ECO:0000314"/>
    <property type="project" value="UniProtKB"/>
</dbReference>
<dbReference type="GO" id="GO:0008201">
    <property type="term" value="F:heparin binding"/>
    <property type="evidence" value="ECO:0000314"/>
    <property type="project" value="UniProtKB"/>
</dbReference>
<dbReference type="GO" id="GO:0005111">
    <property type="term" value="F:type 2 fibroblast growth factor receptor binding"/>
    <property type="evidence" value="ECO:0000353"/>
    <property type="project" value="UniProtKB"/>
</dbReference>
<dbReference type="GO" id="GO:0030036">
    <property type="term" value="P:actin cytoskeleton organization"/>
    <property type="evidence" value="ECO:0000314"/>
    <property type="project" value="UniProtKB"/>
</dbReference>
<dbReference type="GO" id="GO:0001525">
    <property type="term" value="P:angiogenesis"/>
    <property type="evidence" value="ECO:0007669"/>
    <property type="project" value="Ensembl"/>
</dbReference>
<dbReference type="GO" id="GO:0001974">
    <property type="term" value="P:blood vessel remodeling"/>
    <property type="evidence" value="ECO:0007669"/>
    <property type="project" value="Ensembl"/>
</dbReference>
<dbReference type="GO" id="GO:0060667">
    <property type="term" value="P:branch elongation involved in salivary gland morphogenesis"/>
    <property type="evidence" value="ECO:0007669"/>
    <property type="project" value="Ensembl"/>
</dbReference>
<dbReference type="GO" id="GO:0048754">
    <property type="term" value="P:branching morphogenesis of an epithelial tube"/>
    <property type="evidence" value="ECO:0000314"/>
    <property type="project" value="UniProtKB"/>
</dbReference>
<dbReference type="GO" id="GO:0060436">
    <property type="term" value="P:bronchiole morphogenesis"/>
    <property type="evidence" value="ECO:0007669"/>
    <property type="project" value="Ensembl"/>
</dbReference>
<dbReference type="GO" id="GO:0060449">
    <property type="term" value="P:bud elongation involved in lung branching"/>
    <property type="evidence" value="ECO:0007669"/>
    <property type="project" value="Ensembl"/>
</dbReference>
<dbReference type="GO" id="GO:0060447">
    <property type="term" value="P:bud outgrowth involved in lung branching"/>
    <property type="evidence" value="ECO:0000314"/>
    <property type="project" value="MGI"/>
</dbReference>
<dbReference type="GO" id="GO:0007368">
    <property type="term" value="P:determination of left/right symmetry"/>
    <property type="evidence" value="ECO:0007669"/>
    <property type="project" value="Ensembl"/>
</dbReference>
<dbReference type="GO" id="GO:0031076">
    <property type="term" value="P:embryonic camera-type eye development"/>
    <property type="evidence" value="ECO:0007669"/>
    <property type="project" value="Ensembl"/>
</dbReference>
<dbReference type="GO" id="GO:0048557">
    <property type="term" value="P:embryonic digestive tract morphogenesis"/>
    <property type="evidence" value="ECO:0007669"/>
    <property type="project" value="Ensembl"/>
</dbReference>
<dbReference type="GO" id="GO:0030538">
    <property type="term" value="P:embryonic genitalia morphogenesis"/>
    <property type="evidence" value="ECO:0007669"/>
    <property type="project" value="Ensembl"/>
</dbReference>
<dbReference type="GO" id="GO:0009880">
    <property type="term" value="P:embryonic pattern specification"/>
    <property type="evidence" value="ECO:0007669"/>
    <property type="project" value="Ensembl"/>
</dbReference>
<dbReference type="GO" id="GO:0001935">
    <property type="term" value="P:endothelial cell proliferation"/>
    <property type="evidence" value="ECO:0007669"/>
    <property type="project" value="Ensembl"/>
</dbReference>
<dbReference type="GO" id="GO:0050673">
    <property type="term" value="P:epithelial cell proliferation"/>
    <property type="evidence" value="ECO:0000314"/>
    <property type="project" value="UniProtKB"/>
</dbReference>
<dbReference type="GO" id="GO:0060664">
    <property type="term" value="P:epithelial cell proliferation involved in salivary gland morphogenesis"/>
    <property type="evidence" value="ECO:0007669"/>
    <property type="project" value="Ensembl"/>
</dbReference>
<dbReference type="GO" id="GO:0070371">
    <property type="term" value="P:ERK1 and ERK2 cascade"/>
    <property type="evidence" value="ECO:0000314"/>
    <property type="project" value="UniProtKB"/>
</dbReference>
<dbReference type="GO" id="GO:0000132">
    <property type="term" value="P:establishment of mitotic spindle orientation"/>
    <property type="evidence" value="ECO:0007669"/>
    <property type="project" value="Ensembl"/>
</dbReference>
<dbReference type="GO" id="GO:0097192">
    <property type="term" value="P:extrinsic apoptotic signaling pathway in absence of ligand"/>
    <property type="evidence" value="ECO:0007669"/>
    <property type="project" value="Ensembl"/>
</dbReference>
<dbReference type="GO" id="GO:0048807">
    <property type="term" value="P:female genitalia morphogenesis"/>
    <property type="evidence" value="ECO:0007669"/>
    <property type="project" value="Ensembl"/>
</dbReference>
<dbReference type="GO" id="GO:1902178">
    <property type="term" value="P:fibroblast growth factor receptor apoptotic signaling pathway"/>
    <property type="evidence" value="ECO:0007669"/>
    <property type="project" value="Ensembl"/>
</dbReference>
<dbReference type="GO" id="GO:0008543">
    <property type="term" value="P:fibroblast growth factor receptor signaling pathway"/>
    <property type="evidence" value="ECO:0000314"/>
    <property type="project" value="MGI"/>
</dbReference>
<dbReference type="GO" id="GO:0060595">
    <property type="term" value="P:fibroblast growth factor receptor signaling pathway involved in mammary gland specification"/>
    <property type="evidence" value="ECO:0007669"/>
    <property type="project" value="Ensembl"/>
</dbReference>
<dbReference type="GO" id="GO:0048144">
    <property type="term" value="P:fibroblast proliferation"/>
    <property type="evidence" value="ECO:0007669"/>
    <property type="project" value="Ensembl"/>
</dbReference>
<dbReference type="GO" id="GO:0031069">
    <property type="term" value="P:hair follicle morphogenesis"/>
    <property type="evidence" value="ECO:0007669"/>
    <property type="project" value="Ensembl"/>
</dbReference>
<dbReference type="GO" id="GO:0070384">
    <property type="term" value="P:Harderian gland development"/>
    <property type="evidence" value="ECO:0007669"/>
    <property type="project" value="Ensembl"/>
</dbReference>
<dbReference type="GO" id="GO:0050930">
    <property type="term" value="P:induction of positive chemotaxis"/>
    <property type="evidence" value="ECO:0007669"/>
    <property type="project" value="Ensembl"/>
</dbReference>
<dbReference type="GO" id="GO:0043616">
    <property type="term" value="P:keratinocyte proliferation"/>
    <property type="evidence" value="ECO:0007669"/>
    <property type="project" value="Ensembl"/>
</dbReference>
<dbReference type="GO" id="GO:0032808">
    <property type="term" value="P:lacrimal gland development"/>
    <property type="evidence" value="ECO:0000315"/>
    <property type="project" value="UniProtKB"/>
</dbReference>
<dbReference type="GO" id="GO:0060174">
    <property type="term" value="P:limb bud formation"/>
    <property type="evidence" value="ECO:0007669"/>
    <property type="project" value="Ensembl"/>
</dbReference>
<dbReference type="GO" id="GO:0060428">
    <property type="term" value="P:lung epithelium development"/>
    <property type="evidence" value="ECO:0000314"/>
    <property type="project" value="MGI"/>
</dbReference>
<dbReference type="GO" id="GO:0061115">
    <property type="term" value="P:lung proximal/distal axis specification"/>
    <property type="evidence" value="ECO:0007669"/>
    <property type="project" value="Ensembl"/>
</dbReference>
<dbReference type="GO" id="GO:0060430">
    <property type="term" value="P:lung saccule development"/>
    <property type="evidence" value="ECO:0000315"/>
    <property type="project" value="UniProtKB"/>
</dbReference>
<dbReference type="GO" id="GO:0048808">
    <property type="term" value="P:male genitalia morphogenesis"/>
    <property type="evidence" value="ECO:0007669"/>
    <property type="project" value="Ensembl"/>
</dbReference>
<dbReference type="GO" id="GO:0060615">
    <property type="term" value="P:mammary gland bud formation"/>
    <property type="evidence" value="ECO:0007669"/>
    <property type="project" value="Ensembl"/>
</dbReference>
<dbReference type="GO" id="GO:0060915">
    <property type="term" value="P:mesenchymal cell differentiation involved in lung development"/>
    <property type="evidence" value="ECO:0007669"/>
    <property type="project" value="Ensembl"/>
</dbReference>
<dbReference type="GO" id="GO:0060496">
    <property type="term" value="P:mesenchymal-epithelial cell signaling involved in lung development"/>
    <property type="evidence" value="ECO:0007669"/>
    <property type="project" value="Ensembl"/>
</dbReference>
<dbReference type="GO" id="GO:0001823">
    <property type="term" value="P:mesonephros development"/>
    <property type="evidence" value="ECO:0000270"/>
    <property type="project" value="UniProtKB"/>
</dbReference>
<dbReference type="GO" id="GO:0001656">
    <property type="term" value="P:metanephros development"/>
    <property type="evidence" value="ECO:0000270"/>
    <property type="project" value="UniProtKB"/>
</dbReference>
<dbReference type="GO" id="GO:0003338">
    <property type="term" value="P:metanephros morphogenesis"/>
    <property type="evidence" value="ECO:0007669"/>
    <property type="project" value="Ensembl"/>
</dbReference>
<dbReference type="GO" id="GO:0042693">
    <property type="term" value="P:muscle cell fate commitment"/>
    <property type="evidence" value="ECO:0007669"/>
    <property type="project" value="Ensembl"/>
</dbReference>
<dbReference type="GO" id="GO:0030857">
    <property type="term" value="P:negative regulation of epithelial cell differentiation"/>
    <property type="evidence" value="ECO:0007669"/>
    <property type="project" value="Ensembl"/>
</dbReference>
<dbReference type="GO" id="GO:2001240">
    <property type="term" value="P:negative regulation of extrinsic apoptotic signaling pathway in absence of ligand"/>
    <property type="evidence" value="ECO:0007669"/>
    <property type="project" value="Ensembl"/>
</dbReference>
<dbReference type="GO" id="GO:2000647">
    <property type="term" value="P:negative regulation of stem cell proliferation"/>
    <property type="evidence" value="ECO:0007669"/>
    <property type="project" value="Ensembl"/>
</dbReference>
<dbReference type="GO" id="GO:0022008">
    <property type="term" value="P:neurogenesis"/>
    <property type="evidence" value="ECO:0000318"/>
    <property type="project" value="GO_Central"/>
</dbReference>
<dbReference type="GO" id="GO:0042475">
    <property type="term" value="P:odontogenesis of dentin-containing tooth"/>
    <property type="evidence" value="ECO:0007669"/>
    <property type="project" value="Ensembl"/>
</dbReference>
<dbReference type="GO" id="GO:0001759">
    <property type="term" value="P:organ induction"/>
    <property type="evidence" value="ECO:0007669"/>
    <property type="project" value="Ensembl"/>
</dbReference>
<dbReference type="GO" id="GO:0030916">
    <property type="term" value="P:otic vesicle formation"/>
    <property type="evidence" value="ECO:0007669"/>
    <property type="project" value="Ensembl"/>
</dbReference>
<dbReference type="GO" id="GO:0031016">
    <property type="term" value="P:pancreas development"/>
    <property type="evidence" value="ECO:0007669"/>
    <property type="project" value="Ensembl"/>
</dbReference>
<dbReference type="GO" id="GO:0021983">
    <property type="term" value="P:pituitary gland development"/>
    <property type="evidence" value="ECO:0007669"/>
    <property type="project" value="Ensembl"/>
</dbReference>
<dbReference type="GO" id="GO:0050918">
    <property type="term" value="P:positive chemotaxis"/>
    <property type="evidence" value="ECO:0000314"/>
    <property type="project" value="UniProtKB"/>
</dbReference>
<dbReference type="GO" id="GO:0032781">
    <property type="term" value="P:positive regulation of ATP-dependent activity"/>
    <property type="evidence" value="ECO:0000314"/>
    <property type="project" value="UniProtKB"/>
</dbReference>
<dbReference type="GO" id="GO:0090263">
    <property type="term" value="P:positive regulation of canonical Wnt signaling pathway"/>
    <property type="evidence" value="ECO:0007669"/>
    <property type="project" value="Ensembl"/>
</dbReference>
<dbReference type="GO" id="GO:0008284">
    <property type="term" value="P:positive regulation of cell population proliferation"/>
    <property type="evidence" value="ECO:0000318"/>
    <property type="project" value="GO_Central"/>
</dbReference>
<dbReference type="GO" id="GO:0045739">
    <property type="term" value="P:positive regulation of DNA repair"/>
    <property type="evidence" value="ECO:0000314"/>
    <property type="project" value="UniProtKB"/>
</dbReference>
<dbReference type="GO" id="GO:0001938">
    <property type="term" value="P:positive regulation of endothelial cell proliferation"/>
    <property type="evidence" value="ECO:0007669"/>
    <property type="project" value="Ensembl"/>
</dbReference>
<dbReference type="GO" id="GO:0010634">
    <property type="term" value="P:positive regulation of epithelial cell migration"/>
    <property type="evidence" value="ECO:0000314"/>
    <property type="project" value="UniProtKB"/>
</dbReference>
<dbReference type="GO" id="GO:0050679">
    <property type="term" value="P:positive regulation of epithelial cell proliferation"/>
    <property type="evidence" value="ECO:0000314"/>
    <property type="project" value="UniProtKB"/>
</dbReference>
<dbReference type="GO" id="GO:0060054">
    <property type="term" value="P:positive regulation of epithelial cell proliferation involved in wound healing"/>
    <property type="evidence" value="ECO:0000303"/>
    <property type="project" value="UniProtKB"/>
</dbReference>
<dbReference type="GO" id="GO:0070374">
    <property type="term" value="P:positive regulation of ERK1 and ERK2 cascade"/>
    <property type="evidence" value="ECO:0007669"/>
    <property type="project" value="Ensembl"/>
</dbReference>
<dbReference type="GO" id="GO:0048146">
    <property type="term" value="P:positive regulation of fibroblast proliferation"/>
    <property type="evidence" value="ECO:0007669"/>
    <property type="project" value="Ensembl"/>
</dbReference>
<dbReference type="GO" id="GO:1900087">
    <property type="term" value="P:positive regulation of G1/S transition of mitotic cell cycle"/>
    <property type="evidence" value="ECO:0000314"/>
    <property type="project" value="UniProtKB"/>
</dbReference>
<dbReference type="GO" id="GO:0071338">
    <property type="term" value="P:positive regulation of hair follicle cell proliferation"/>
    <property type="evidence" value="ECO:0000314"/>
    <property type="project" value="UniProtKB"/>
</dbReference>
<dbReference type="GO" id="GO:0051549">
    <property type="term" value="P:positive regulation of keratinocyte migration"/>
    <property type="evidence" value="ECO:0000314"/>
    <property type="project" value="UniProtKB"/>
</dbReference>
<dbReference type="GO" id="GO:0010838">
    <property type="term" value="P:positive regulation of keratinocyte proliferation"/>
    <property type="evidence" value="ECO:0000314"/>
    <property type="project" value="UniProtKB"/>
</dbReference>
<dbReference type="GO" id="GO:0050671">
    <property type="term" value="P:positive regulation of lymphocyte proliferation"/>
    <property type="evidence" value="ECO:0000314"/>
    <property type="project" value="UniProtKB"/>
</dbReference>
<dbReference type="GO" id="GO:0043410">
    <property type="term" value="P:positive regulation of MAPK cascade"/>
    <property type="evidence" value="ECO:0000314"/>
    <property type="project" value="UniProtKB"/>
</dbReference>
<dbReference type="GO" id="GO:0045747">
    <property type="term" value="P:positive regulation of Notch signaling pathway"/>
    <property type="evidence" value="ECO:0007669"/>
    <property type="project" value="Ensembl"/>
</dbReference>
<dbReference type="GO" id="GO:0050731">
    <property type="term" value="P:positive regulation of peptidyl-tyrosine phosphorylation"/>
    <property type="evidence" value="ECO:0000314"/>
    <property type="project" value="UniProtKB"/>
</dbReference>
<dbReference type="GO" id="GO:0046579">
    <property type="term" value="P:positive regulation of Ras protein signal transduction"/>
    <property type="evidence" value="ECO:0000314"/>
    <property type="project" value="UniProtKB"/>
</dbReference>
<dbReference type="GO" id="GO:2000648">
    <property type="term" value="P:positive regulation of stem cell proliferation"/>
    <property type="evidence" value="ECO:0007669"/>
    <property type="project" value="Ensembl"/>
</dbReference>
<dbReference type="GO" id="GO:0045944">
    <property type="term" value="P:positive regulation of transcription by RNA polymerase II"/>
    <property type="evidence" value="ECO:0007669"/>
    <property type="project" value="Ensembl"/>
</dbReference>
<dbReference type="GO" id="GO:0050677">
    <property type="term" value="P:positive regulation of urothelial cell proliferation"/>
    <property type="evidence" value="ECO:0000314"/>
    <property type="project" value="UniProtKB"/>
</dbReference>
<dbReference type="GO" id="GO:0030949">
    <property type="term" value="P:positive regulation of vascular endothelial growth factor receptor signaling pathway"/>
    <property type="evidence" value="ECO:0007669"/>
    <property type="project" value="Ensembl"/>
</dbReference>
<dbReference type="GO" id="GO:0070352">
    <property type="term" value="P:positive regulation of white fat cell proliferation"/>
    <property type="evidence" value="ECO:0007669"/>
    <property type="project" value="Ensembl"/>
</dbReference>
<dbReference type="GO" id="GO:0060513">
    <property type="term" value="P:prostatic bud formation"/>
    <property type="evidence" value="ECO:0007669"/>
    <property type="project" value="Ensembl"/>
</dbReference>
<dbReference type="GO" id="GO:0034394">
    <property type="term" value="P:protein localization to cell surface"/>
    <property type="evidence" value="ECO:0000314"/>
    <property type="project" value="UniProtKB"/>
</dbReference>
<dbReference type="GO" id="GO:0060019">
    <property type="term" value="P:radial glial cell differentiation"/>
    <property type="evidence" value="ECO:0000250"/>
    <property type="project" value="UniProtKB"/>
</dbReference>
<dbReference type="GO" id="GO:0032925">
    <property type="term" value="P:regulation of activin receptor signaling pathway"/>
    <property type="evidence" value="ECO:0007669"/>
    <property type="project" value="Ensembl"/>
</dbReference>
<dbReference type="GO" id="GO:0060665">
    <property type="term" value="P:regulation of branching involved in salivary gland morphogenesis by mesenchymal-epithelial signaling"/>
    <property type="evidence" value="ECO:0007669"/>
    <property type="project" value="Ensembl"/>
</dbReference>
<dbReference type="GO" id="GO:0030334">
    <property type="term" value="P:regulation of cell migration"/>
    <property type="evidence" value="ECO:0000318"/>
    <property type="project" value="GO_Central"/>
</dbReference>
<dbReference type="GO" id="GO:0046877">
    <property type="term" value="P:regulation of saliva secretion"/>
    <property type="evidence" value="ECO:0000315"/>
    <property type="project" value="UniProtKB"/>
</dbReference>
<dbReference type="GO" id="GO:0008589">
    <property type="term" value="P:regulation of smoothened signaling pathway"/>
    <property type="evidence" value="ECO:0007669"/>
    <property type="project" value="Ensembl"/>
</dbReference>
<dbReference type="GO" id="GO:0032355">
    <property type="term" value="P:response to estradiol"/>
    <property type="evidence" value="ECO:0007669"/>
    <property type="project" value="Ensembl"/>
</dbReference>
<dbReference type="GO" id="GO:0032496">
    <property type="term" value="P:response to lipopolysaccharide"/>
    <property type="evidence" value="ECO:0007669"/>
    <property type="project" value="Ensembl"/>
</dbReference>
<dbReference type="GO" id="GO:0007431">
    <property type="term" value="P:salivary gland development"/>
    <property type="evidence" value="ECO:0000315"/>
    <property type="project" value="UniProtKB"/>
</dbReference>
<dbReference type="GO" id="GO:0061033">
    <property type="term" value="P:secretion by lung epithelial cell involved in lung growth"/>
    <property type="evidence" value="ECO:0000314"/>
    <property type="project" value="UniProtKB"/>
</dbReference>
<dbReference type="GO" id="GO:0060879">
    <property type="term" value="P:semicircular canal fusion"/>
    <property type="evidence" value="ECO:0007669"/>
    <property type="project" value="Ensembl"/>
</dbReference>
<dbReference type="GO" id="GO:0051145">
    <property type="term" value="P:smooth muscle cell differentiation"/>
    <property type="evidence" value="ECO:0007669"/>
    <property type="project" value="Ensembl"/>
</dbReference>
<dbReference type="GO" id="GO:0035019">
    <property type="term" value="P:somatic stem cell population maintenance"/>
    <property type="evidence" value="ECO:0007669"/>
    <property type="project" value="Ensembl"/>
</dbReference>
<dbReference type="GO" id="GO:0048536">
    <property type="term" value="P:spleen development"/>
    <property type="evidence" value="ECO:0007669"/>
    <property type="project" value="Ensembl"/>
</dbReference>
<dbReference type="GO" id="GO:0072089">
    <property type="term" value="P:stem cell proliferation"/>
    <property type="evidence" value="ECO:0007669"/>
    <property type="project" value="Ensembl"/>
</dbReference>
<dbReference type="GO" id="GO:0060661">
    <property type="term" value="P:submandibular salivary gland formation"/>
    <property type="evidence" value="ECO:0007669"/>
    <property type="project" value="Ensembl"/>
</dbReference>
<dbReference type="GO" id="GO:0070075">
    <property type="term" value="P:tear secretion"/>
    <property type="evidence" value="ECO:0000315"/>
    <property type="project" value="UniProtKB"/>
</dbReference>
<dbReference type="GO" id="GO:0048538">
    <property type="term" value="P:thymus development"/>
    <property type="evidence" value="ECO:0000314"/>
    <property type="project" value="UniProtKB"/>
</dbReference>
<dbReference type="GO" id="GO:0030878">
    <property type="term" value="P:thyroid gland development"/>
    <property type="evidence" value="ECO:0007669"/>
    <property type="project" value="Ensembl"/>
</dbReference>
<dbReference type="GO" id="GO:0042246">
    <property type="term" value="P:tissue regeneration"/>
    <property type="evidence" value="ECO:0007669"/>
    <property type="project" value="Ensembl"/>
</dbReference>
<dbReference type="GO" id="GO:0060510">
    <property type="term" value="P:type II pneumocyte differentiation"/>
    <property type="evidence" value="ECO:0007669"/>
    <property type="project" value="Ensembl"/>
</dbReference>
<dbReference type="GO" id="GO:0050674">
    <property type="term" value="P:urothelial cell proliferation"/>
    <property type="evidence" value="ECO:0000314"/>
    <property type="project" value="UniProtKB"/>
</dbReference>
<dbReference type="GO" id="GO:0048010">
    <property type="term" value="P:vascular endothelial growth factor receptor signaling pathway"/>
    <property type="evidence" value="ECO:0007669"/>
    <property type="project" value="Ensembl"/>
</dbReference>
<dbReference type="GO" id="GO:0050872">
    <property type="term" value="P:white fat cell differentiation"/>
    <property type="evidence" value="ECO:0007669"/>
    <property type="project" value="Ensembl"/>
</dbReference>
<dbReference type="GO" id="GO:0070343">
    <property type="term" value="P:white fat cell proliferation"/>
    <property type="evidence" value="ECO:0007669"/>
    <property type="project" value="Ensembl"/>
</dbReference>
<dbReference type="GO" id="GO:0016055">
    <property type="term" value="P:Wnt signaling pathway"/>
    <property type="evidence" value="ECO:0007669"/>
    <property type="project" value="Ensembl"/>
</dbReference>
<dbReference type="GO" id="GO:0042060">
    <property type="term" value="P:wound healing"/>
    <property type="evidence" value="ECO:0000314"/>
    <property type="project" value="UniProtKB"/>
</dbReference>
<dbReference type="CDD" id="cd23320">
    <property type="entry name" value="beta-trefoil_FGF10"/>
    <property type="match status" value="1"/>
</dbReference>
<dbReference type="FunFam" id="2.80.10.50:FF:000004">
    <property type="entry name" value="Fibroblast growth factor"/>
    <property type="match status" value="1"/>
</dbReference>
<dbReference type="Gene3D" id="2.80.10.50">
    <property type="match status" value="1"/>
</dbReference>
<dbReference type="IDEAL" id="IID00527"/>
<dbReference type="InterPro" id="IPR002209">
    <property type="entry name" value="Fibroblast_GF_fam"/>
</dbReference>
<dbReference type="InterPro" id="IPR008996">
    <property type="entry name" value="IL1/FGF"/>
</dbReference>
<dbReference type="PANTHER" id="PTHR11486">
    <property type="entry name" value="FIBROBLAST GROWTH FACTOR"/>
    <property type="match status" value="1"/>
</dbReference>
<dbReference type="Pfam" id="PF00167">
    <property type="entry name" value="FGF"/>
    <property type="match status" value="1"/>
</dbReference>
<dbReference type="PRINTS" id="PR00263">
    <property type="entry name" value="HBGFFGF"/>
</dbReference>
<dbReference type="PRINTS" id="PR00262">
    <property type="entry name" value="IL1HBGF"/>
</dbReference>
<dbReference type="SMART" id="SM00442">
    <property type="entry name" value="FGF"/>
    <property type="match status" value="1"/>
</dbReference>
<dbReference type="SUPFAM" id="SSF50353">
    <property type="entry name" value="Cytokine"/>
    <property type="match status" value="1"/>
</dbReference>
<dbReference type="PROSITE" id="PS00247">
    <property type="entry name" value="HBGF_FGF"/>
    <property type="match status" value="1"/>
</dbReference>
<evidence type="ECO:0000255" key="1"/>
<evidence type="ECO:0000269" key="2">
    <source>
    </source>
</evidence>
<evidence type="ECO:0000269" key="3">
    <source>
    </source>
</evidence>
<evidence type="ECO:0000269" key="4">
    <source>
    </source>
</evidence>
<evidence type="ECO:0000269" key="5">
    <source>
    </source>
</evidence>
<evidence type="ECO:0000269" key="6">
    <source>
    </source>
</evidence>
<evidence type="ECO:0000269" key="7">
    <source>
    </source>
</evidence>
<evidence type="ECO:0000305" key="8"/>
<evidence type="ECO:0007829" key="9">
    <source>
        <dbReference type="PDB" id="1NUN"/>
    </source>
</evidence>
<reference key="1">
    <citation type="journal article" date="1997" name="J. Biol. Chem.">
        <title>Structure and expression of human fibroblast growth factor-10.</title>
        <authorList>
            <person name="Emoto H."/>
            <person name="Tagashira S."/>
            <person name="Mattei M.-G."/>
            <person name="Yamasaki M."/>
            <person name="Hashimoto G."/>
            <person name="Katsumata T."/>
            <person name="Negoro T."/>
            <person name="Nakatsuka M."/>
            <person name="Birnbaum D."/>
            <person name="Coulier F."/>
            <person name="Itoh N."/>
        </authorList>
    </citation>
    <scope>NUCLEOTIDE SEQUENCE [MRNA]</scope>
    <source>
        <tissue>Lung</tissue>
    </source>
</reference>
<reference key="2">
    <citation type="submission" date="1997-07" db="EMBL/GenBank/DDBJ databases">
        <title>Cutaneous wound healing by keratinocyte growth factor 2.</title>
        <authorList>
            <person name="Jimenez P.A."/>
            <person name="Gruber J.R."/>
            <person name="Liu B."/>
            <person name="Feng P."/>
            <person name="Florence C."/>
            <person name="Blunt A."/>
            <person name="Huddleston K.A."/>
            <person name="Teliska M."/>
            <person name="Alfonso P."/>
            <person name="Coleman T.A."/>
            <person name="Ornitz D.M."/>
            <person name="Dillon P.A."/>
            <person name="Duan R.D."/>
        </authorList>
    </citation>
    <scope>NUCLEOTIDE SEQUENCE [MRNA]</scope>
    <source>
        <tissue>Lung</tissue>
    </source>
</reference>
<reference key="3">
    <citation type="submission" date="2001-08" db="EMBL/GenBank/DDBJ databases">
        <authorList>
            <person name="Zhang Y."/>
            <person name="Zhang B."/>
            <person name="Zhou Y."/>
            <person name="Peng X."/>
            <person name="Yuan J."/>
            <person name="Qiang B."/>
        </authorList>
    </citation>
    <scope>NUCLEOTIDE SEQUENCE [MRNA]</scope>
</reference>
<reference key="4">
    <citation type="submission" date="2009-07" db="EMBL/GenBank/DDBJ databases">
        <title>Expression of FGF10 in human prostate stromal cells.</title>
        <authorList>
            <person name="Nakhla A.M."/>
            <person name="Hryb D.J."/>
            <person name="Kahn S.M."/>
            <person name="Romas N.A."/>
            <person name="Rosner W."/>
        </authorList>
    </citation>
    <scope>NUCLEOTIDE SEQUENCE [MRNA]</scope>
</reference>
<reference key="5">
    <citation type="submission" date="2004-06" db="EMBL/GenBank/DDBJ databases">
        <title>Cloning of human full open reading frames in Gateway(TM) system entry vector (pDONR201).</title>
        <authorList>
            <person name="Halleck A."/>
            <person name="Ebert L."/>
            <person name="Mkoundinya M."/>
            <person name="Schick M."/>
            <person name="Eisenstein S."/>
            <person name="Neubert P."/>
            <person name="Kstrang K."/>
            <person name="Schatten R."/>
            <person name="Shen B."/>
            <person name="Henze S."/>
            <person name="Mar W."/>
            <person name="Korn B."/>
            <person name="Zuo D."/>
            <person name="Hu Y."/>
            <person name="LaBaer J."/>
        </authorList>
    </citation>
    <scope>NUCLEOTIDE SEQUENCE [LARGE SCALE MRNA]</scope>
</reference>
<reference key="6">
    <citation type="submission" date="2004-04" db="EMBL/GenBank/DDBJ databases">
        <authorList>
            <consortium name="NIEHS SNPs program"/>
        </authorList>
    </citation>
    <scope>NUCLEOTIDE SEQUENCE [GENOMIC DNA]</scope>
</reference>
<reference key="7">
    <citation type="submission" date="2005-07" db="EMBL/GenBank/DDBJ databases">
        <authorList>
            <person name="Mural R.J."/>
            <person name="Istrail S."/>
            <person name="Sutton G."/>
            <person name="Florea L."/>
            <person name="Halpern A.L."/>
            <person name="Mobarry C.M."/>
            <person name="Lippert R."/>
            <person name="Walenz B."/>
            <person name="Shatkay H."/>
            <person name="Dew I."/>
            <person name="Miller J.R."/>
            <person name="Flanigan M.J."/>
            <person name="Edwards N.J."/>
            <person name="Bolanos R."/>
            <person name="Fasulo D."/>
            <person name="Halldorsson B.V."/>
            <person name="Hannenhalli S."/>
            <person name="Turner R."/>
            <person name="Yooseph S."/>
            <person name="Lu F."/>
            <person name="Nusskern D.R."/>
            <person name="Shue B.C."/>
            <person name="Zheng X.H."/>
            <person name="Zhong F."/>
            <person name="Delcher A.L."/>
            <person name="Huson D.H."/>
            <person name="Kravitz S.A."/>
            <person name="Mouchard L."/>
            <person name="Reinert K."/>
            <person name="Remington K.A."/>
            <person name="Clark A.G."/>
            <person name="Waterman M.S."/>
            <person name="Eichler E.E."/>
            <person name="Adams M.D."/>
            <person name="Hunkapiller M.W."/>
            <person name="Myers E.W."/>
            <person name="Venter J.C."/>
        </authorList>
    </citation>
    <scope>NUCLEOTIDE SEQUENCE [LARGE SCALE GENOMIC DNA]</scope>
</reference>
<reference key="8">
    <citation type="journal article" date="2004" name="Genome Res.">
        <title>The status, quality, and expansion of the NIH full-length cDNA project: the Mammalian Gene Collection (MGC).</title>
        <authorList>
            <consortium name="The MGC Project Team"/>
        </authorList>
    </citation>
    <scope>NUCLEOTIDE SEQUENCE [LARGE SCALE MRNA]</scope>
    <source>
        <tissue>Brain</tissue>
    </source>
</reference>
<reference key="9">
    <citation type="journal article" date="2005" name="Oncogene">
        <title>The fibroblast growth factor binding protein is a novel interaction partner of FGF-7, FGF-10 and FGF-22 and regulates FGF activity: implications for epithelial repair.</title>
        <authorList>
            <person name="Beer H.-D."/>
            <person name="Bittner M."/>
            <person name="Niklaus G."/>
            <person name="Munding C."/>
            <person name="Max N."/>
            <person name="Goppelt A."/>
            <person name="Werner S."/>
        </authorList>
    </citation>
    <scope>INTERACTION WITH FGFBP1</scope>
</reference>
<reference key="10">
    <citation type="journal article" date="2006" name="J. Biol. Chem.">
        <title>Receptor specificity of the fibroblast growth factor family. The complete mammalian FGF family.</title>
        <authorList>
            <person name="Zhang X."/>
            <person name="Ibrahimi O.A."/>
            <person name="Olsen S.K."/>
            <person name="Umemori H."/>
            <person name="Mohammadi M."/>
            <person name="Ornitz D.M."/>
        </authorList>
    </citation>
    <scope>INTERACTION WITH FGFR1 AND FGFR2</scope>
    <scope>FUNCTION IN STIMULATION OF CELL PROLIFERATION</scope>
</reference>
<reference key="11">
    <citation type="journal article" date="2010" name="Nat. Rev. Cancer">
        <title>Fibroblast growth factor signalling: from development to cancer.</title>
        <authorList>
            <person name="Turner N."/>
            <person name="Grose R."/>
        </authorList>
    </citation>
    <scope>REVIEW</scope>
</reference>
<reference key="12">
    <citation type="journal article" date="2003" name="Proc. Natl. Acad. Sci. U.S.A.">
        <title>Structural basis by which alternative splicing confers specificity in fibroblast growth factor receptors.</title>
        <authorList>
            <person name="Yeh B.K."/>
            <person name="Igarashi M."/>
            <person name="Eliseenkova A.V."/>
            <person name="Plotnikov A.N."/>
            <person name="Sher I."/>
            <person name="Ron D."/>
            <person name="Aaronson S.A."/>
            <person name="Mohammadi M."/>
        </authorList>
    </citation>
    <scope>X-RAY CRYSTALLOGRAPHY (2.9 ANGSTROMS) OF 69-208 IN COMPLEX WITH FGFR2</scope>
</reference>
<reference key="13">
    <citation type="journal article" date="2005" name="Nat. Genet.">
        <title>Mutations in the gene encoding fibroblast growth factor 10 are associated with aplasia of lacrimal and salivary glands.</title>
        <authorList>
            <person name="Entesarian M."/>
            <person name="Matsson H."/>
            <person name="Klar J."/>
            <person name="Bergendal B."/>
            <person name="Olson L."/>
            <person name="Arakaki R."/>
            <person name="Hayashi Y."/>
            <person name="Ohuchi H."/>
            <person name="Falahat B."/>
            <person name="Bolstad A.I."/>
            <person name="Jonsson R."/>
            <person name="Wahren-Herlenius M."/>
            <person name="Dahl N."/>
        </authorList>
    </citation>
    <scope>INVOLVEMENT IN ALSG</scope>
</reference>
<reference key="14">
    <citation type="journal article" date="2006" name="Clin. Genet.">
        <title>LADD syndrome is caused by FGF10 mutations.</title>
        <authorList>
            <person name="Milunsky J.M."/>
            <person name="Zhao G."/>
            <person name="Maher T.A."/>
            <person name="Colby R."/>
            <person name="Everman D.B."/>
        </authorList>
    </citation>
    <scope>VARIANT LADD3 ARG-156</scope>
    <scope>INVOLVEMENT IN LADD3</scope>
</reference>
<reference key="15">
    <citation type="journal article" date="2006" name="Nat. Genet.">
        <title>Mutations in different components of FGF signaling in LADD syndrome.</title>
        <authorList>
            <person name="Rohmann E."/>
            <person name="Brunner H.G."/>
            <person name="Kayserili H."/>
            <person name="Uyguner O."/>
            <person name="Nuernberg G."/>
            <person name="Lew E.D."/>
            <person name="Dobbie A."/>
            <person name="Eswarakumar V.P."/>
            <person name="Uzumcu A."/>
            <person name="Ulubil-Emeroglu M."/>
            <person name="Leroy J.G."/>
            <person name="Li Y."/>
            <person name="Becker C."/>
            <person name="Lehnerdt K."/>
            <person name="Cremers C.W.R.J."/>
            <person name="Yueksel-Apak M."/>
            <person name="Nuernberg P."/>
            <person name="Kubisch C."/>
            <person name="Schlessinger J."/>
            <person name="van Bokhoven H."/>
            <person name="Wollnik B."/>
        </authorList>
    </citation>
    <scope>VARIANT LADD3 PHE-106</scope>
    <scope>INVOLVEMENT IN LADD3</scope>
</reference>
<accession>O15520</accession>
<accession>C7FDY0</accession>
<accession>Q6FHR3</accession>
<accession>Q6FHT6</accession>
<accession>Q96P59</accession>
<proteinExistence type="evidence at protein level"/>